<evidence type="ECO:0000250" key="1"/>
<evidence type="ECO:0000256" key="2">
    <source>
        <dbReference type="SAM" id="MobiDB-lite"/>
    </source>
</evidence>
<evidence type="ECO:0000305" key="3"/>
<comment type="subcellular location">
    <subcellularLocation>
        <location evidence="1">Nucleus</location>
        <location evidence="1">Nucleolus</location>
    </subcellularLocation>
</comment>
<comment type="similarity">
    <text evidence="3">Belongs to the NOP16 family.</text>
</comment>
<gene>
    <name type="primary">nop16</name>
    <name type="ORF">TNeu076a10.1</name>
</gene>
<reference key="1">
    <citation type="submission" date="2006-06" db="EMBL/GenBank/DDBJ databases">
        <authorList>
            <consortium name="Sanger Xenopus tropicalis EST/cDNA project"/>
        </authorList>
    </citation>
    <scope>NUCLEOTIDE SEQUENCE [LARGE SCALE MRNA]</scope>
    <source>
        <tissue>Neurula</tissue>
    </source>
</reference>
<reference key="2">
    <citation type="submission" date="2004-03" db="EMBL/GenBank/DDBJ databases">
        <authorList>
            <consortium name="NIH - Xenopus Gene Collection (XGC) project"/>
        </authorList>
    </citation>
    <scope>NUCLEOTIDE SEQUENCE [LARGE SCALE MRNA]</scope>
    <source>
        <tissue>Embryo</tissue>
    </source>
</reference>
<accession>Q6NVB0</accession>
<organism>
    <name type="scientific">Xenopus tropicalis</name>
    <name type="common">Western clawed frog</name>
    <name type="synonym">Silurana tropicalis</name>
    <dbReference type="NCBI Taxonomy" id="8364"/>
    <lineage>
        <taxon>Eukaryota</taxon>
        <taxon>Metazoa</taxon>
        <taxon>Chordata</taxon>
        <taxon>Craniata</taxon>
        <taxon>Vertebrata</taxon>
        <taxon>Euteleostomi</taxon>
        <taxon>Amphibia</taxon>
        <taxon>Batrachia</taxon>
        <taxon>Anura</taxon>
        <taxon>Pipoidea</taxon>
        <taxon>Pipidae</taxon>
        <taxon>Xenopodinae</taxon>
        <taxon>Xenopus</taxon>
        <taxon>Silurana</taxon>
    </lineage>
</organism>
<sequence>MGKVKKKRGNTFNYNVDRKKLKRKARKKHAPRIPCEPIRSAWNDGKSVAKNLADMGLAANPNKSLPIRPSQVKDAEEQPGKVIKKPYVLEGLQALASLPSKQTMGISSDMIQYVRHMVENYGEDYKAMARDEKNYYQDTPKQIQRKVNLYKRHHPQDYQALVASRIMQ</sequence>
<dbReference type="EMBL" id="CR848327">
    <property type="protein sequence ID" value="CAJ83251.1"/>
    <property type="molecule type" value="mRNA"/>
</dbReference>
<dbReference type="EMBL" id="BC068216">
    <property type="protein sequence ID" value="AAH68216.1"/>
    <property type="molecule type" value="mRNA"/>
</dbReference>
<dbReference type="RefSeq" id="NP_001096218.1">
    <property type="nucleotide sequence ID" value="NM_001102748.1"/>
</dbReference>
<dbReference type="SMR" id="Q6NVB0"/>
<dbReference type="FunCoup" id="Q6NVB0">
    <property type="interactions" value="2780"/>
</dbReference>
<dbReference type="STRING" id="8364.ENSXETP00000035963"/>
<dbReference type="PaxDb" id="8364-ENSXETP00000048326"/>
<dbReference type="DNASU" id="100124769"/>
<dbReference type="GeneID" id="100124769"/>
<dbReference type="KEGG" id="xtr:100124769"/>
<dbReference type="AGR" id="Xenbase:XB-GENE-991038"/>
<dbReference type="CTD" id="51491"/>
<dbReference type="Xenbase" id="XB-GENE-991038">
    <property type="gene designation" value="nop16"/>
</dbReference>
<dbReference type="eggNOG" id="KOG4706">
    <property type="taxonomic scope" value="Eukaryota"/>
</dbReference>
<dbReference type="HOGENOM" id="CLU_115103_0_0_1"/>
<dbReference type="InParanoid" id="Q6NVB0"/>
<dbReference type="OMA" id="RRNHGQW"/>
<dbReference type="OrthoDB" id="285729at2759"/>
<dbReference type="PhylomeDB" id="Q6NVB0"/>
<dbReference type="TreeFam" id="TF323541"/>
<dbReference type="Proteomes" id="UP000008143">
    <property type="component" value="Chromosome 3"/>
</dbReference>
<dbReference type="Bgee" id="ENSXETG00000022342">
    <property type="expression patterns" value="Expressed in liver and 13 other cell types or tissues"/>
</dbReference>
<dbReference type="GO" id="GO:0005730">
    <property type="term" value="C:nucleolus"/>
    <property type="evidence" value="ECO:0007669"/>
    <property type="project" value="UniProtKB-SubCell"/>
</dbReference>
<dbReference type="InterPro" id="IPR019002">
    <property type="entry name" value="Ribosome_biogenesis_Nop16"/>
</dbReference>
<dbReference type="PANTHER" id="PTHR13243">
    <property type="entry name" value="HSPC111 PROTEIN-RELATED"/>
    <property type="match status" value="1"/>
</dbReference>
<dbReference type="PANTHER" id="PTHR13243:SF1">
    <property type="entry name" value="NUCLEOLAR PROTEIN 16"/>
    <property type="match status" value="1"/>
</dbReference>
<dbReference type="Pfam" id="PF09420">
    <property type="entry name" value="Nop16"/>
    <property type="match status" value="1"/>
</dbReference>
<name>NOP16_XENTR</name>
<proteinExistence type="evidence at transcript level"/>
<keyword id="KW-0539">Nucleus</keyword>
<keyword id="KW-1185">Reference proteome</keyword>
<feature type="chain" id="PRO_0000250156" description="Nucleolar protein 16">
    <location>
        <begin position="1"/>
        <end position="168"/>
    </location>
</feature>
<feature type="region of interest" description="Disordered" evidence="2">
    <location>
        <begin position="20"/>
        <end position="40"/>
    </location>
</feature>
<feature type="region of interest" description="Disordered" evidence="2">
    <location>
        <begin position="59"/>
        <end position="79"/>
    </location>
</feature>
<feature type="compositionally biased region" description="Basic residues" evidence="2">
    <location>
        <begin position="20"/>
        <end position="31"/>
    </location>
</feature>
<protein>
    <recommendedName>
        <fullName>Nucleolar protein 16</fullName>
    </recommendedName>
</protein>